<evidence type="ECO:0000255" key="1">
    <source>
        <dbReference type="HAMAP-Rule" id="MF_00588"/>
    </source>
</evidence>
<dbReference type="EC" id="6.3.5.-" evidence="1"/>
<dbReference type="EMBL" id="CP000254">
    <property type="protein sequence ID" value="ABD39860.1"/>
    <property type="molecule type" value="Genomic_DNA"/>
</dbReference>
<dbReference type="RefSeq" id="WP_011447156.1">
    <property type="nucleotide sequence ID" value="NC_007796.1"/>
</dbReference>
<dbReference type="SMR" id="Q2FR18"/>
<dbReference type="FunCoup" id="Q2FR18">
    <property type="interactions" value="22"/>
</dbReference>
<dbReference type="STRING" id="323259.Mhun_0082"/>
<dbReference type="EnsemblBacteria" id="ABD39860">
    <property type="protein sequence ID" value="ABD39860"/>
    <property type="gene ID" value="Mhun_0082"/>
</dbReference>
<dbReference type="GeneID" id="3922195"/>
<dbReference type="KEGG" id="mhu:Mhun_0082"/>
<dbReference type="eggNOG" id="arCOG01719">
    <property type="taxonomic scope" value="Archaea"/>
</dbReference>
<dbReference type="HOGENOM" id="CLU_030702_0_0_2"/>
<dbReference type="InParanoid" id="Q2FR18"/>
<dbReference type="OrthoDB" id="7316at2157"/>
<dbReference type="Proteomes" id="UP000001941">
    <property type="component" value="Chromosome"/>
</dbReference>
<dbReference type="GO" id="GO:0005737">
    <property type="term" value="C:cytoplasm"/>
    <property type="evidence" value="ECO:0007669"/>
    <property type="project" value="InterPro"/>
</dbReference>
<dbReference type="GO" id="GO:0004812">
    <property type="term" value="F:aminoacyl-tRNA ligase activity"/>
    <property type="evidence" value="ECO:0007669"/>
    <property type="project" value="InterPro"/>
</dbReference>
<dbReference type="GO" id="GO:0005524">
    <property type="term" value="F:ATP binding"/>
    <property type="evidence" value="ECO:0007669"/>
    <property type="project" value="UniProtKB-KW"/>
</dbReference>
<dbReference type="GO" id="GO:0050567">
    <property type="term" value="F:glutaminyl-tRNA synthase (glutamine-hydrolyzing) activity"/>
    <property type="evidence" value="ECO:0007669"/>
    <property type="project" value="UniProtKB-UniRule"/>
</dbReference>
<dbReference type="GO" id="GO:0070681">
    <property type="term" value="P:glutaminyl-tRNAGln biosynthesis via transamidation"/>
    <property type="evidence" value="ECO:0007669"/>
    <property type="project" value="TreeGrafter"/>
</dbReference>
<dbReference type="GO" id="GO:0006412">
    <property type="term" value="P:translation"/>
    <property type="evidence" value="ECO:0007669"/>
    <property type="project" value="UniProtKB-UniRule"/>
</dbReference>
<dbReference type="Gene3D" id="1.10.10.410">
    <property type="match status" value="1"/>
</dbReference>
<dbReference type="Gene3D" id="3.30.1360.30">
    <property type="entry name" value="GAD-like domain"/>
    <property type="match status" value="1"/>
</dbReference>
<dbReference type="Gene3D" id="1.10.150.380">
    <property type="entry name" value="GatB domain, N-terminal subdomain"/>
    <property type="match status" value="1"/>
</dbReference>
<dbReference type="HAMAP" id="MF_00588">
    <property type="entry name" value="GatE"/>
    <property type="match status" value="1"/>
</dbReference>
<dbReference type="InterPro" id="IPR017959">
    <property type="entry name" value="Asn/Gln-tRNA_amidoTrfase_suB/E"/>
</dbReference>
<dbReference type="InterPro" id="IPR006075">
    <property type="entry name" value="Asn/Gln-tRNA_Trfase_suB/E_cat"/>
</dbReference>
<dbReference type="InterPro" id="IPR018027">
    <property type="entry name" value="Asn/Gln_amidotransferase"/>
</dbReference>
<dbReference type="InterPro" id="IPR003789">
    <property type="entry name" value="Asn/Gln_tRNA_amidoTrase-B-like"/>
</dbReference>
<dbReference type="InterPro" id="IPR004115">
    <property type="entry name" value="GAD-like_sf"/>
</dbReference>
<dbReference type="InterPro" id="IPR029351">
    <property type="entry name" value="GAD_dom"/>
</dbReference>
<dbReference type="InterPro" id="IPR042114">
    <property type="entry name" value="GatB_C_1"/>
</dbReference>
<dbReference type="InterPro" id="IPR023168">
    <property type="entry name" value="GatB_Yqey_C_2"/>
</dbReference>
<dbReference type="InterPro" id="IPR004414">
    <property type="entry name" value="GatE"/>
</dbReference>
<dbReference type="InterPro" id="IPR017958">
    <property type="entry name" value="Gln-tRNA_amidoTrfase_suB_CS"/>
</dbReference>
<dbReference type="InterPro" id="IPR014746">
    <property type="entry name" value="Gln_synth/guanido_kin_cat_dom"/>
</dbReference>
<dbReference type="NCBIfam" id="TIGR00134">
    <property type="entry name" value="gatE_arch"/>
    <property type="match status" value="1"/>
</dbReference>
<dbReference type="NCBIfam" id="NF003107">
    <property type="entry name" value="PRK04028.1"/>
    <property type="match status" value="1"/>
</dbReference>
<dbReference type="PANTHER" id="PTHR11659">
    <property type="entry name" value="GLUTAMYL-TRNA GLN AMIDOTRANSFERASE SUBUNIT B MITOCHONDRIAL AND PROKARYOTIC PET112-RELATED"/>
    <property type="match status" value="1"/>
</dbReference>
<dbReference type="PANTHER" id="PTHR11659:SF2">
    <property type="entry name" value="GLUTAMYL-TRNA(GLN) AMIDOTRANSFERASE SUBUNIT E"/>
    <property type="match status" value="1"/>
</dbReference>
<dbReference type="Pfam" id="PF02938">
    <property type="entry name" value="GAD"/>
    <property type="match status" value="1"/>
</dbReference>
<dbReference type="Pfam" id="PF02934">
    <property type="entry name" value="GatB_N"/>
    <property type="match status" value="1"/>
</dbReference>
<dbReference type="Pfam" id="PF02637">
    <property type="entry name" value="GatB_Yqey"/>
    <property type="match status" value="1"/>
</dbReference>
<dbReference type="SMART" id="SM00845">
    <property type="entry name" value="GatB_Yqey"/>
    <property type="match status" value="1"/>
</dbReference>
<dbReference type="SUPFAM" id="SSF55261">
    <property type="entry name" value="GAD domain-like"/>
    <property type="match status" value="1"/>
</dbReference>
<dbReference type="SUPFAM" id="SSF89095">
    <property type="entry name" value="GatB/YqeY motif"/>
    <property type="match status" value="1"/>
</dbReference>
<dbReference type="SUPFAM" id="SSF55931">
    <property type="entry name" value="Glutamine synthetase/guanido kinase"/>
    <property type="match status" value="1"/>
</dbReference>
<dbReference type="PROSITE" id="PS01234">
    <property type="entry name" value="GATB"/>
    <property type="match status" value="1"/>
</dbReference>
<feature type="chain" id="PRO_1000146943" description="Glutamyl-tRNA(Gln) amidotransferase subunit E">
    <location>
        <begin position="1"/>
        <end position="614"/>
    </location>
</feature>
<comment type="function">
    <text evidence="1">Allows the formation of correctly charged Gln-tRNA(Gln) through the transamidation of misacylated Glu-tRNA(Gln) in organisms which lack glutaminyl-tRNA synthetase. The reaction takes place in the presence of glutamine and ATP through an activated gamma-phospho-Glu-tRNA(Gln). The GatDE system is specific for glutamate and does not act on aspartate.</text>
</comment>
<comment type="catalytic activity">
    <reaction evidence="1">
        <text>L-glutamyl-tRNA(Gln) + L-glutamine + ATP + H2O = L-glutaminyl-tRNA(Gln) + L-glutamate + ADP + phosphate + H(+)</text>
        <dbReference type="Rhea" id="RHEA:17521"/>
        <dbReference type="Rhea" id="RHEA-COMP:9681"/>
        <dbReference type="Rhea" id="RHEA-COMP:9684"/>
        <dbReference type="ChEBI" id="CHEBI:15377"/>
        <dbReference type="ChEBI" id="CHEBI:15378"/>
        <dbReference type="ChEBI" id="CHEBI:29985"/>
        <dbReference type="ChEBI" id="CHEBI:30616"/>
        <dbReference type="ChEBI" id="CHEBI:43474"/>
        <dbReference type="ChEBI" id="CHEBI:58359"/>
        <dbReference type="ChEBI" id="CHEBI:78520"/>
        <dbReference type="ChEBI" id="CHEBI:78521"/>
        <dbReference type="ChEBI" id="CHEBI:456216"/>
    </reaction>
</comment>
<comment type="subunit">
    <text evidence="1">Heterodimer of GatD and GatE.</text>
</comment>
<comment type="similarity">
    <text evidence="1">Belongs to the GatB/GatE family. GatE subfamily.</text>
</comment>
<proteinExistence type="inferred from homology"/>
<accession>Q2FR18</accession>
<protein>
    <recommendedName>
        <fullName evidence="1">Glutamyl-tRNA(Gln) amidotransferase subunit E</fullName>
        <shortName evidence="1">Glu-ADT subunit E</shortName>
        <ecNumber evidence="1">6.3.5.-</ecNumber>
    </recommendedName>
</protein>
<keyword id="KW-0067">ATP-binding</keyword>
<keyword id="KW-0436">Ligase</keyword>
<keyword id="KW-0547">Nucleotide-binding</keyword>
<keyword id="KW-0648">Protein biosynthesis</keyword>
<keyword id="KW-1185">Reference proteome</keyword>
<organism>
    <name type="scientific">Methanospirillum hungatei JF-1 (strain ATCC 27890 / DSM 864 / NBRC 100397 / JF-1)</name>
    <dbReference type="NCBI Taxonomy" id="323259"/>
    <lineage>
        <taxon>Archaea</taxon>
        <taxon>Methanobacteriati</taxon>
        <taxon>Methanobacteriota</taxon>
        <taxon>Stenosarchaea group</taxon>
        <taxon>Methanomicrobia</taxon>
        <taxon>Methanomicrobiales</taxon>
        <taxon>Methanospirillaceae</taxon>
        <taxon>Methanospirillum</taxon>
    </lineage>
</organism>
<sequence>MTIDYQKLGLIAGIEIHQQLNTKEKLFCRCPTTIREAEESKGEFFRYLRATKSEMGELDRAAEEEMMQVRQFRYLTYDTTCLVENDEEPPAPLNEEALDIVLTIAKVCRMTPVPEIHTMRKLVIDGSNTSGFQRTALVAMNGTLPGGAGIETVCLEEEAAQRIEDTIFSLDRLGIPLIEITTSPCMHTPEAVQETAAQIGMILRSTGKVKRGLGTIRQDINISIREGARVEIKGVQELDLIAEVVRREVCRQVSLLEIREELKKRGASVEKTLVDVTSLFTDSKSRVLKSAPKILAIRLNKFAGLVGREIQPGRRLGSEMSDYAKKCGVGGLFHTDELPAYGVTEDEVTNLKKALDATPDDCVIIVADKPQRCQCAMQQIIRRAEMAFEGVPKETRKMLEGGSTAYMRPLPGAARMYPETDVFQVRVTPERFASLEIPEMIDDTIARYMQEFGLAREVARQMAYSERRSAFEEAIHSGIKPALAERAFNSTLRELSREGAQVHRIKDEDILQVLILINSGEVAKEALSPILTALAEGKTPAEACERAAPKVSEEELTKIINRIVAERADFIKERGNAATGPVMGVVMKEVRGSVDGKIVNQILREAISQVLKNA</sequence>
<gene>
    <name evidence="1" type="primary">gatE</name>
    <name type="ordered locus">Mhun_0082</name>
</gene>
<name>GATE_METHJ</name>
<reference key="1">
    <citation type="journal article" date="2016" name="Stand. Genomic Sci.">
        <title>Complete genome sequence of Methanospirillum hungatei type strain JF1.</title>
        <authorList>
            <person name="Gunsalus R.P."/>
            <person name="Cook L.E."/>
            <person name="Crable B."/>
            <person name="Rohlin L."/>
            <person name="McDonald E."/>
            <person name="Mouttaki H."/>
            <person name="Sieber J.R."/>
            <person name="Poweleit N."/>
            <person name="Zhou H."/>
            <person name="Lapidus A.L."/>
            <person name="Daligault H.E."/>
            <person name="Land M."/>
            <person name="Gilna P."/>
            <person name="Ivanova N."/>
            <person name="Kyrpides N."/>
            <person name="Culley D.E."/>
            <person name="McInerney M.J."/>
        </authorList>
    </citation>
    <scope>NUCLEOTIDE SEQUENCE [LARGE SCALE GENOMIC DNA]</scope>
    <source>
        <strain>ATCC 27890 / DSM 864 / NBRC 100397 / JF-1</strain>
    </source>
</reference>